<organism>
    <name type="scientific">Pseudomonas putida (strain W619)</name>
    <dbReference type="NCBI Taxonomy" id="390235"/>
    <lineage>
        <taxon>Bacteria</taxon>
        <taxon>Pseudomonadati</taxon>
        <taxon>Pseudomonadota</taxon>
        <taxon>Gammaproteobacteria</taxon>
        <taxon>Pseudomonadales</taxon>
        <taxon>Pseudomonadaceae</taxon>
        <taxon>Pseudomonas</taxon>
    </lineage>
</organism>
<reference key="1">
    <citation type="submission" date="2008-02" db="EMBL/GenBank/DDBJ databases">
        <title>Complete sequence of Pseudomonas putida W619.</title>
        <authorList>
            <person name="Copeland A."/>
            <person name="Lucas S."/>
            <person name="Lapidus A."/>
            <person name="Barry K."/>
            <person name="Detter J.C."/>
            <person name="Glavina del Rio T."/>
            <person name="Dalin E."/>
            <person name="Tice H."/>
            <person name="Pitluck S."/>
            <person name="Chain P."/>
            <person name="Malfatti S."/>
            <person name="Shin M."/>
            <person name="Vergez L."/>
            <person name="Schmutz J."/>
            <person name="Larimer F."/>
            <person name="Land M."/>
            <person name="Hauser L."/>
            <person name="Kyrpides N."/>
            <person name="Kim E."/>
            <person name="Taghavi S."/>
            <person name="Vangronsveld D."/>
            <person name="van der Lelie D."/>
            <person name="Richardson P."/>
        </authorList>
    </citation>
    <scope>NUCLEOTIDE SEQUENCE [LARGE SCALE GENOMIC DNA]</scope>
    <source>
        <strain>W619</strain>
    </source>
</reference>
<proteinExistence type="inferred from homology"/>
<sequence>MTTVRTRIAPSPTGDPHVGTAYIALFNYCFAKQHGGEFILRIEDTDQLRSTRESEQQIFDALRWLGIEWNEGPDVGGPHGPYRQSERGEIYARYAKQLVDAGHAFYCFCTAEELEQMRAEQMARGETPRYDGRALLLSDEEVQRRLAAGEPHVIRMKVPSEGICVVPDMLRGDVEIPWDRMDMQVLMKNDGLPTYFLANVVDDHLMGITHVLRGEEWLPSAPKLIKLYEYFGWEQPKLCYMPLLRNPDKSKLSKRKNPTSVTFYERMGFMPEAMLNYLGRMGWSMPDEREKFSLAEMVEHFDLSRISLGGPIFDIEKLSWLNGQWLRELPVEEFAARVQKWAFNSDYMMKIAPHVQGRVETFSQIAPLGGFFFEGALKLDAKLFESKKLSADQVRQVMQLILWKLESLRQWEKERITGCIQAVVEALELKLRDAMPLMFAAITGQASSVSVLDAMEILGPDLTRYRLRQALDLLGGVSKKENKEWEKLLANIA</sequence>
<dbReference type="EC" id="6.1.1.17" evidence="1"/>
<dbReference type="EMBL" id="CP000949">
    <property type="protein sequence ID" value="ACA72045.1"/>
    <property type="molecule type" value="Genomic_DNA"/>
</dbReference>
<dbReference type="SMR" id="B1J522"/>
<dbReference type="STRING" id="390235.PputW619_1540"/>
<dbReference type="KEGG" id="ppw:PputW619_1540"/>
<dbReference type="eggNOG" id="COG0008">
    <property type="taxonomic scope" value="Bacteria"/>
</dbReference>
<dbReference type="HOGENOM" id="CLU_015768_6_3_6"/>
<dbReference type="OrthoDB" id="9807503at2"/>
<dbReference type="GO" id="GO:0005829">
    <property type="term" value="C:cytosol"/>
    <property type="evidence" value="ECO:0007669"/>
    <property type="project" value="TreeGrafter"/>
</dbReference>
<dbReference type="GO" id="GO:0005524">
    <property type="term" value="F:ATP binding"/>
    <property type="evidence" value="ECO:0007669"/>
    <property type="project" value="UniProtKB-UniRule"/>
</dbReference>
<dbReference type="GO" id="GO:0004818">
    <property type="term" value="F:glutamate-tRNA ligase activity"/>
    <property type="evidence" value="ECO:0007669"/>
    <property type="project" value="UniProtKB-UniRule"/>
</dbReference>
<dbReference type="GO" id="GO:0000049">
    <property type="term" value="F:tRNA binding"/>
    <property type="evidence" value="ECO:0007669"/>
    <property type="project" value="InterPro"/>
</dbReference>
<dbReference type="GO" id="GO:0008270">
    <property type="term" value="F:zinc ion binding"/>
    <property type="evidence" value="ECO:0007669"/>
    <property type="project" value="InterPro"/>
</dbReference>
<dbReference type="GO" id="GO:0006424">
    <property type="term" value="P:glutamyl-tRNA aminoacylation"/>
    <property type="evidence" value="ECO:0007669"/>
    <property type="project" value="UniProtKB-UniRule"/>
</dbReference>
<dbReference type="CDD" id="cd00808">
    <property type="entry name" value="GluRS_core"/>
    <property type="match status" value="1"/>
</dbReference>
<dbReference type="FunFam" id="1.10.10.350:FF:000007">
    <property type="entry name" value="Glutamate--tRNA ligase"/>
    <property type="match status" value="1"/>
</dbReference>
<dbReference type="FunFam" id="3.40.50.620:FF:000045">
    <property type="entry name" value="Glutamate--tRNA ligase, mitochondrial"/>
    <property type="match status" value="1"/>
</dbReference>
<dbReference type="Gene3D" id="1.10.10.350">
    <property type="match status" value="1"/>
</dbReference>
<dbReference type="Gene3D" id="3.40.50.620">
    <property type="entry name" value="HUPs"/>
    <property type="match status" value="1"/>
</dbReference>
<dbReference type="HAMAP" id="MF_00022">
    <property type="entry name" value="Glu_tRNA_synth_type1"/>
    <property type="match status" value="1"/>
</dbReference>
<dbReference type="InterPro" id="IPR045462">
    <property type="entry name" value="aa-tRNA-synth_I_cd-bd"/>
</dbReference>
<dbReference type="InterPro" id="IPR020751">
    <property type="entry name" value="aa-tRNA-synth_I_codon-bd_sub2"/>
</dbReference>
<dbReference type="InterPro" id="IPR001412">
    <property type="entry name" value="aa-tRNA-synth_I_CS"/>
</dbReference>
<dbReference type="InterPro" id="IPR008925">
    <property type="entry name" value="aa_tRNA-synth_I_cd-bd_sf"/>
</dbReference>
<dbReference type="InterPro" id="IPR004527">
    <property type="entry name" value="Glu-tRNA-ligase_bac/mito"/>
</dbReference>
<dbReference type="InterPro" id="IPR000924">
    <property type="entry name" value="Glu/Gln-tRNA-synth"/>
</dbReference>
<dbReference type="InterPro" id="IPR020058">
    <property type="entry name" value="Glu/Gln-tRNA-synth_Ib_cat-dom"/>
</dbReference>
<dbReference type="InterPro" id="IPR049940">
    <property type="entry name" value="GluQ/Sye"/>
</dbReference>
<dbReference type="InterPro" id="IPR033910">
    <property type="entry name" value="GluRS_core"/>
</dbReference>
<dbReference type="InterPro" id="IPR014729">
    <property type="entry name" value="Rossmann-like_a/b/a_fold"/>
</dbReference>
<dbReference type="NCBIfam" id="TIGR00464">
    <property type="entry name" value="gltX_bact"/>
    <property type="match status" value="1"/>
</dbReference>
<dbReference type="PANTHER" id="PTHR43311">
    <property type="entry name" value="GLUTAMATE--TRNA LIGASE"/>
    <property type="match status" value="1"/>
</dbReference>
<dbReference type="PANTHER" id="PTHR43311:SF2">
    <property type="entry name" value="GLUTAMATE--TRNA LIGASE, MITOCHONDRIAL-RELATED"/>
    <property type="match status" value="1"/>
</dbReference>
<dbReference type="Pfam" id="PF19269">
    <property type="entry name" value="Anticodon_2"/>
    <property type="match status" value="1"/>
</dbReference>
<dbReference type="Pfam" id="PF00749">
    <property type="entry name" value="tRNA-synt_1c"/>
    <property type="match status" value="1"/>
</dbReference>
<dbReference type="PRINTS" id="PR00987">
    <property type="entry name" value="TRNASYNTHGLU"/>
</dbReference>
<dbReference type="SUPFAM" id="SSF48163">
    <property type="entry name" value="An anticodon-binding domain of class I aminoacyl-tRNA synthetases"/>
    <property type="match status" value="1"/>
</dbReference>
<dbReference type="SUPFAM" id="SSF52374">
    <property type="entry name" value="Nucleotidylyl transferase"/>
    <property type="match status" value="1"/>
</dbReference>
<dbReference type="PROSITE" id="PS00178">
    <property type="entry name" value="AA_TRNA_LIGASE_I"/>
    <property type="match status" value="1"/>
</dbReference>
<feature type="chain" id="PRO_1000090098" description="Glutamate--tRNA ligase">
    <location>
        <begin position="1"/>
        <end position="493"/>
    </location>
</feature>
<feature type="short sequence motif" description="'HIGH' region" evidence="1">
    <location>
        <begin position="10"/>
        <end position="20"/>
    </location>
</feature>
<feature type="short sequence motif" description="'KMSKS' region" evidence="1">
    <location>
        <begin position="251"/>
        <end position="255"/>
    </location>
</feature>
<feature type="binding site" evidence="1">
    <location>
        <position position="254"/>
    </location>
    <ligand>
        <name>ATP</name>
        <dbReference type="ChEBI" id="CHEBI:30616"/>
    </ligand>
</feature>
<comment type="function">
    <text evidence="1">Catalyzes the attachment of glutamate to tRNA(Glu) in a two-step reaction: glutamate is first activated by ATP to form Glu-AMP and then transferred to the acceptor end of tRNA(Glu).</text>
</comment>
<comment type="catalytic activity">
    <reaction evidence="1">
        <text>tRNA(Glu) + L-glutamate + ATP = L-glutamyl-tRNA(Glu) + AMP + diphosphate</text>
        <dbReference type="Rhea" id="RHEA:23540"/>
        <dbReference type="Rhea" id="RHEA-COMP:9663"/>
        <dbReference type="Rhea" id="RHEA-COMP:9680"/>
        <dbReference type="ChEBI" id="CHEBI:29985"/>
        <dbReference type="ChEBI" id="CHEBI:30616"/>
        <dbReference type="ChEBI" id="CHEBI:33019"/>
        <dbReference type="ChEBI" id="CHEBI:78442"/>
        <dbReference type="ChEBI" id="CHEBI:78520"/>
        <dbReference type="ChEBI" id="CHEBI:456215"/>
        <dbReference type="EC" id="6.1.1.17"/>
    </reaction>
</comment>
<comment type="subunit">
    <text evidence="1">Monomer.</text>
</comment>
<comment type="subcellular location">
    <subcellularLocation>
        <location evidence="1">Cytoplasm</location>
    </subcellularLocation>
</comment>
<comment type="similarity">
    <text evidence="1">Belongs to the class-I aminoacyl-tRNA synthetase family. Glutamate--tRNA ligase type 1 subfamily.</text>
</comment>
<gene>
    <name evidence="1" type="primary">gltX</name>
    <name type="ordered locus">PputW619_1540</name>
</gene>
<protein>
    <recommendedName>
        <fullName evidence="1">Glutamate--tRNA ligase</fullName>
        <ecNumber evidence="1">6.1.1.17</ecNumber>
    </recommendedName>
    <alternativeName>
        <fullName evidence="1">Glutamyl-tRNA synthetase</fullName>
        <shortName evidence="1">GluRS</shortName>
    </alternativeName>
</protein>
<name>SYE_PSEPW</name>
<keyword id="KW-0030">Aminoacyl-tRNA synthetase</keyword>
<keyword id="KW-0067">ATP-binding</keyword>
<keyword id="KW-0963">Cytoplasm</keyword>
<keyword id="KW-0436">Ligase</keyword>
<keyword id="KW-0547">Nucleotide-binding</keyword>
<keyword id="KW-0648">Protein biosynthesis</keyword>
<accession>B1J522</accession>
<evidence type="ECO:0000255" key="1">
    <source>
        <dbReference type="HAMAP-Rule" id="MF_00022"/>
    </source>
</evidence>